<feature type="chain" id="PRO_0000077153" description="Large ribosomal subunit protein uL3">
    <location>
        <begin position="1"/>
        <end position="209"/>
    </location>
</feature>
<feature type="region of interest" description="Disordered" evidence="2">
    <location>
        <begin position="119"/>
        <end position="145"/>
    </location>
</feature>
<name>RL3_STAAC</name>
<evidence type="ECO:0000255" key="1">
    <source>
        <dbReference type="HAMAP-Rule" id="MF_01325"/>
    </source>
</evidence>
<evidence type="ECO:0000256" key="2">
    <source>
        <dbReference type="SAM" id="MobiDB-lite"/>
    </source>
</evidence>
<evidence type="ECO:0000305" key="3"/>
<comment type="function">
    <text evidence="1">One of the primary rRNA binding proteins, it binds directly near the 3'-end of the 23S rRNA, where it nucleates assembly of the 50S subunit.</text>
</comment>
<comment type="subunit">
    <text evidence="1">Part of the 50S ribosomal subunit. Forms a cluster with proteins L14 and L19.</text>
</comment>
<comment type="similarity">
    <text evidence="1">Belongs to the universal ribosomal protein uL3 family.</text>
</comment>
<gene>
    <name evidence="1" type="primary">rplC</name>
    <name type="ordered locus">SACOL2239</name>
</gene>
<dbReference type="EMBL" id="CP000046">
    <property type="protein sequence ID" value="AAW37114.1"/>
    <property type="molecule type" value="Genomic_DNA"/>
</dbReference>
<dbReference type="SMR" id="Q5HDV8"/>
<dbReference type="KEGG" id="sac:SACOL2239"/>
<dbReference type="HOGENOM" id="CLU_044142_4_1_9"/>
<dbReference type="Proteomes" id="UP000000530">
    <property type="component" value="Chromosome"/>
</dbReference>
<dbReference type="GO" id="GO:0022625">
    <property type="term" value="C:cytosolic large ribosomal subunit"/>
    <property type="evidence" value="ECO:0007669"/>
    <property type="project" value="TreeGrafter"/>
</dbReference>
<dbReference type="GO" id="GO:0019843">
    <property type="term" value="F:rRNA binding"/>
    <property type="evidence" value="ECO:0007669"/>
    <property type="project" value="UniProtKB-UniRule"/>
</dbReference>
<dbReference type="GO" id="GO:0003735">
    <property type="term" value="F:structural constituent of ribosome"/>
    <property type="evidence" value="ECO:0007669"/>
    <property type="project" value="InterPro"/>
</dbReference>
<dbReference type="GO" id="GO:0006412">
    <property type="term" value="P:translation"/>
    <property type="evidence" value="ECO:0007669"/>
    <property type="project" value="UniProtKB-UniRule"/>
</dbReference>
<dbReference type="FunFam" id="2.40.30.10:FF:000004">
    <property type="entry name" value="50S ribosomal protein L3"/>
    <property type="match status" value="1"/>
</dbReference>
<dbReference type="FunFam" id="3.30.160.810:FF:000002">
    <property type="entry name" value="50S ribosomal protein L3"/>
    <property type="match status" value="1"/>
</dbReference>
<dbReference type="Gene3D" id="3.30.160.810">
    <property type="match status" value="1"/>
</dbReference>
<dbReference type="Gene3D" id="2.40.30.10">
    <property type="entry name" value="Translation factors"/>
    <property type="match status" value="1"/>
</dbReference>
<dbReference type="HAMAP" id="MF_01325_B">
    <property type="entry name" value="Ribosomal_uL3_B"/>
    <property type="match status" value="1"/>
</dbReference>
<dbReference type="InterPro" id="IPR000597">
    <property type="entry name" value="Ribosomal_uL3"/>
</dbReference>
<dbReference type="InterPro" id="IPR019927">
    <property type="entry name" value="Ribosomal_uL3_bac/org-type"/>
</dbReference>
<dbReference type="InterPro" id="IPR019926">
    <property type="entry name" value="Ribosomal_uL3_CS"/>
</dbReference>
<dbReference type="InterPro" id="IPR009000">
    <property type="entry name" value="Transl_B-barrel_sf"/>
</dbReference>
<dbReference type="NCBIfam" id="TIGR03625">
    <property type="entry name" value="L3_bact"/>
    <property type="match status" value="1"/>
</dbReference>
<dbReference type="PANTHER" id="PTHR11229">
    <property type="entry name" value="50S RIBOSOMAL PROTEIN L3"/>
    <property type="match status" value="1"/>
</dbReference>
<dbReference type="PANTHER" id="PTHR11229:SF16">
    <property type="entry name" value="LARGE RIBOSOMAL SUBUNIT PROTEIN UL3C"/>
    <property type="match status" value="1"/>
</dbReference>
<dbReference type="Pfam" id="PF00297">
    <property type="entry name" value="Ribosomal_L3"/>
    <property type="match status" value="1"/>
</dbReference>
<dbReference type="SUPFAM" id="SSF50447">
    <property type="entry name" value="Translation proteins"/>
    <property type="match status" value="1"/>
</dbReference>
<dbReference type="PROSITE" id="PS00474">
    <property type="entry name" value="RIBOSOMAL_L3"/>
    <property type="match status" value="1"/>
</dbReference>
<sequence>MTQVFGENGELIPVTVVEAKENVVLQKKTVEVDGYNAIQVGFEDKKAYKKDAKSNKYANKPAEGHAKKADAAPKRFIREFRNVDVDAYEVGQEVSVDTFVAGDVIDVTGVSKGKGFQGAIKRHGQSRGPMSHGSHFHRAPGSVGMASDASRVFKGQKMPGRMGGNTVTVQNLEVVQVDTENKVILVKGNVPGPKKGLVEIRTSIKKGNK</sequence>
<organism>
    <name type="scientific">Staphylococcus aureus (strain COL)</name>
    <dbReference type="NCBI Taxonomy" id="93062"/>
    <lineage>
        <taxon>Bacteria</taxon>
        <taxon>Bacillati</taxon>
        <taxon>Bacillota</taxon>
        <taxon>Bacilli</taxon>
        <taxon>Bacillales</taxon>
        <taxon>Staphylococcaceae</taxon>
        <taxon>Staphylococcus</taxon>
    </lineage>
</organism>
<keyword id="KW-0687">Ribonucleoprotein</keyword>
<keyword id="KW-0689">Ribosomal protein</keyword>
<keyword id="KW-0694">RNA-binding</keyword>
<keyword id="KW-0699">rRNA-binding</keyword>
<proteinExistence type="inferred from homology"/>
<accession>Q5HDV8</accession>
<protein>
    <recommendedName>
        <fullName evidence="1">Large ribosomal subunit protein uL3</fullName>
    </recommendedName>
    <alternativeName>
        <fullName evidence="3">50S ribosomal protein L3</fullName>
    </alternativeName>
</protein>
<reference key="1">
    <citation type="journal article" date="2005" name="J. Bacteriol.">
        <title>Insights on evolution of virulence and resistance from the complete genome analysis of an early methicillin-resistant Staphylococcus aureus strain and a biofilm-producing methicillin-resistant Staphylococcus epidermidis strain.</title>
        <authorList>
            <person name="Gill S.R."/>
            <person name="Fouts D.E."/>
            <person name="Archer G.L."/>
            <person name="Mongodin E.F."/>
            <person name="DeBoy R.T."/>
            <person name="Ravel J."/>
            <person name="Paulsen I.T."/>
            <person name="Kolonay J.F."/>
            <person name="Brinkac L.M."/>
            <person name="Beanan M.J."/>
            <person name="Dodson R.J."/>
            <person name="Daugherty S.C."/>
            <person name="Madupu R."/>
            <person name="Angiuoli S.V."/>
            <person name="Durkin A.S."/>
            <person name="Haft D.H."/>
            <person name="Vamathevan J.J."/>
            <person name="Khouri H."/>
            <person name="Utterback T.R."/>
            <person name="Lee C."/>
            <person name="Dimitrov G."/>
            <person name="Jiang L."/>
            <person name="Qin H."/>
            <person name="Weidman J."/>
            <person name="Tran K."/>
            <person name="Kang K.H."/>
            <person name="Hance I.R."/>
            <person name="Nelson K.E."/>
            <person name="Fraser C.M."/>
        </authorList>
    </citation>
    <scope>NUCLEOTIDE SEQUENCE [LARGE SCALE GENOMIC DNA]</scope>
    <source>
        <strain>COL</strain>
    </source>
</reference>